<evidence type="ECO:0000250" key="1">
    <source>
        <dbReference type="UniProtKB" id="P03322"/>
    </source>
</evidence>
<evidence type="ECO:0000250" key="2">
    <source>
        <dbReference type="UniProtKB" id="P0C776"/>
    </source>
</evidence>
<evidence type="ECO:0000255" key="3">
    <source>
        <dbReference type="PROSITE-ProRule" id="PRU00047"/>
    </source>
</evidence>
<evidence type="ECO:0000255" key="4">
    <source>
        <dbReference type="PROSITE-ProRule" id="PRU00275"/>
    </source>
</evidence>
<evidence type="ECO:0000255" key="5">
    <source>
        <dbReference type="PROSITE-ProRule" id="PRU10094"/>
    </source>
</evidence>
<evidence type="ECO:0000256" key="6">
    <source>
        <dbReference type="SAM" id="MobiDB-lite"/>
    </source>
</evidence>
<evidence type="ECO:0000305" key="7"/>
<evidence type="ECO:0007829" key="8">
    <source>
        <dbReference type="PDB" id="1D1D"/>
    </source>
</evidence>
<sequence>MEAVIKVISSACKTYCGKTSPSKKEIGAMLSLLQKEGLLMSPSDLYSPGSWDPITAALSQRAMVLGKSGELKTWGLVLGALKAAREEQVTSEQAKFWLGLGGGRVSPPGPECIEKPATERRIDKGEEVGETTVQRDAKMAPEETATPKTVGTSCYHCGTAIGCNCATASAPPPPYVGSGLYPSLAGVGEQQGQGGDTPRGAEQPRAEPGHAGLAPGPALTDWARIREELASTGPPVVAMPVVIKTEGPAWTPLEPKLITRLADTVRTKGLRSPITMAEVEALMSSPLLPHDVTNLMRVILGPAPYALWMDAWGVQLQTVIAAATRDPRHPANGQGRGERTNLDRLKGLADGMVGNPQGQAALLRPGELVAITASALQAFREVARLAEPAGPWADITQGPSESFVDFANRLIKAVEGSDLPPSARAPVIIDCFRQKSQPDIQQLIRAAPSTLTTPGEIIKYVLDRQKIAPLTDQGIAAAMSSAIQPLVMAVVNRERDGQTGSGGRARRLCYTCGSPGHYQAQCPKKRKSGNSRERCQLCDGMGHNAKQCRRRDSNQGQRPGRGLSSGPWPVSEQPAVSLAMTMEHKDRPLVRVILTNTGSHPVKQRSVYITALLDSGADITIISEEDWPTDWPVVDTANPQIHGIGGGIPMRKSRDMIELGVINRDGSLERPLLLFPAVAMVRGSILGRDCLQGLGLRLTNL</sequence>
<comment type="function">
    <molecule>Gag polyprotein</molecule>
    <text evidence="1">The p10 domain folds back and interacts with the capsid protein domain during Gag polyprotein assembly in the immature particle (before the maturation cleavage that splits the 2 domains).</text>
</comment>
<comment type="function">
    <molecule>Capsid protein p27, alternate cleaved 1</molecule>
    <text evidence="1">Self-associates to form the irregular polyhedron core composed of hexamers and pentamers, that encapsulates the genomic RNA-nucleocapsid complex. Assembles as a tube in vitro (By similarity). Binds to inositol hexakisphosphate (IP6), which allows the assembly of the polyhedral capsid (By similarity).</text>
</comment>
<comment type="function">
    <molecule>Capsid protein p27, alternate cleaved 2</molecule>
    <text evidence="1">Self-associates to form the irregular polyhedron core composed of hexamers and pentamers, that encapsulates the genomic RNA-nucleocapsid complex. Assembles as a tube in vitro (By similarity). Binds to inositol hexakisphosphate (IP6), which allows the assembly of the polyhedral capsid (By similarity).</text>
</comment>
<comment type="function">
    <molecule>Nucleocapsid protein p12</molecule>
    <text evidence="1 2">Binds strongly to viral nucleic acids and promotes their packaging (By similarity). Plays a role in the maturation-stabilization of the viral dimeric RNA via highly structured zinc-binding motifs (By similarity).</text>
</comment>
<comment type="function">
    <molecule>Spacer peptide</molecule>
    <text evidence="1">Plays a role in the oligomerization of the Gag polyprotein and in the stabilization of the immature particle. Essential layering element during tube assembly.</text>
</comment>
<comment type="function">
    <molecule>Protease p15</molecule>
    <text evidence="4">Aspartyl protease that mediates proteolytic cleavages of Gag and Gag-Pol polyproteins during or shortly after the release of the virion from the plasma membrane. Cleavages take place as an ordered, step-wise cascade to yield mature proteins. This process is called maturation. Displays maximal activity during the budding process just prior to particle release from the cell.</text>
</comment>
<comment type="subunit">
    <molecule>Protease p15</molecule>
    <text evidence="1">Active as a homodimer.</text>
</comment>
<comment type="subunit">
    <molecule>Capsid protein p27, alternate cleaved 1</molecule>
    <text evidence="1">Homodimer. Homomultimer. Homohexamer.</text>
</comment>
<comment type="subunit">
    <molecule>Capsid protein p27, alternate cleaved 2</molecule>
    <text evidence="1">Homodimer. Homomultimer. Homohexamer.</text>
</comment>
<comment type="subunit">
    <molecule>Gag polyprotein</molecule>
    <text evidence="2">Homohexamer. Interacts (via p2B domain) with host PACSIN2; this interaction probably allows PACSIN2 recruitment to viral assembly sites.</text>
</comment>
<comment type="subcellular location">
    <molecule>Matrix protein p19</molecule>
    <subcellularLocation>
        <location evidence="1">Virion</location>
    </subcellularLocation>
</comment>
<comment type="subcellular location">
    <molecule>Capsid protein p27, alternate cleaved 1</molecule>
    <subcellularLocation>
        <location evidence="1">Virion</location>
    </subcellularLocation>
</comment>
<comment type="subcellular location">
    <molecule>Capsid protein p27, alternate cleaved 2</molecule>
    <subcellularLocation>
        <location evidence="1">Virion</location>
    </subcellularLocation>
</comment>
<comment type="subcellular location">
    <molecule>Nucleocapsid protein p12</molecule>
    <subcellularLocation>
        <location evidence="1">Virion</location>
    </subcellularLocation>
</comment>
<comment type="subcellular location">
    <molecule>Gag polyprotein</molecule>
    <subcellularLocation>
        <location evidence="1">Host nucleus</location>
        <location evidence="1">Host nucleolus</location>
    </subcellularLocation>
    <subcellularLocation>
        <location evidence="1">Host nucleus</location>
        <location evidence="1">Host nucleoplasm</location>
    </subcellularLocation>
    <text evidence="1">Shuttles between nucleoplasm and nucleolus.</text>
</comment>
<comment type="alternative products">
    <event type="ribosomal frameshifting"/>
    <isoform>
        <id>O92954-1</id>
        <name>Gag polyprotein</name>
        <sequence type="displayed"/>
    </isoform>
    <isoform>
        <id>O92956-1</id>
        <name>Gag-Pol polyprotein</name>
        <sequence type="external"/>
    </isoform>
    <text>Translation results in the formation of the Gag polyprotein. Ribosomal frameshifting at the gag/pol genes boundary produces the Gag-Pol polyprotein.</text>
</comment>
<comment type="domain">
    <molecule>Gag polyprotein</molecule>
    <text evidence="1">Late-budding domains (L domains) are short sequence motifs essential for viral particle release. They can occur individually or in close proximity within structural proteins. They interacts with sorting cellular proteins of the multivesicular body (MVB) pathway. Most of these proteins are class E vacuolar protein sorting factors belonging to ESCRT-I, ESCRT-II or ESCRT-III complexes. P2B contains two L domains: a PPXY motif which probably binds to the WW domains of HECT (homologous to E6-AP C-terminus) E3 ubiquitin ligases and a LYPX(n)L domain which is known to bind the Alix adaptator protein.</text>
</comment>
<comment type="domain">
    <molecule>Gag polyprotein</molecule>
    <text evidence="1">Contains a nuclear export signal in p10 and a nucleolar localization signal in nucleocapsid protein p12.</text>
</comment>
<comment type="domain">
    <text evidence="1">Capsid protein p27: Proton-driven dimerization of the C-terminus facilitates capsid assembly.</text>
</comment>
<comment type="PTM">
    <molecule>Gag polyprotein</molecule>
    <text evidence="1">Specific enzymatic cleavages in vivo yield mature proteins. The cleavage at the C-terminus of the Capsid protein p27 is slowly trimmed by the viral protease, sometimes being cut internally thereby generating the short version of the capsid protein and a capsid protein C-terminally extended by 3 amino acids in a ratio of 2:1.</text>
</comment>
<comment type="miscellaneous">
    <molecule>Isoform Gag polyprotein</molecule>
    <text evidence="7">Produced by conventional translation.</text>
</comment>
<gene>
    <name type="primary">gag</name>
</gene>
<organismHost>
    <name type="scientific">Gallus gallus</name>
    <name type="common">Chicken</name>
    <dbReference type="NCBI Taxonomy" id="9031"/>
</organismHost>
<protein>
    <recommendedName>
        <fullName>Gag polyprotein</fullName>
    </recommendedName>
    <component>
        <recommendedName>
            <fullName>Matrix protein p19</fullName>
        </recommendedName>
    </component>
    <component>
        <recommendedName>
            <fullName>p2A</fullName>
        </recommendedName>
    </component>
    <component>
        <recommendedName>
            <fullName>p2B</fullName>
        </recommendedName>
    </component>
    <component>
        <recommendedName>
            <fullName>p10</fullName>
        </recommendedName>
    </component>
    <component>
        <recommendedName>
            <fullName>Capsid protein p27, alternate cleaved 1</fullName>
        </recommendedName>
    </component>
    <component>
        <recommendedName>
            <fullName>Capsid protein p27, alternate cleaved 2</fullName>
        </recommendedName>
    </component>
    <component>
        <recommendedName>
            <fullName>Spacer peptide</fullName>
            <shortName>SP</shortName>
        </recommendedName>
        <alternativeName>
            <fullName>p3</fullName>
        </alternativeName>
    </component>
    <component>
        <recommendedName>
            <fullName>Nucleocapsid protein p12</fullName>
        </recommendedName>
        <alternativeName>
            <fullName evidence="2">NCp12</fullName>
        </alternativeName>
    </component>
    <component>
        <recommendedName>
            <fullName>Protease p15</fullName>
            <ecNumber>3.4.23.-</ecNumber>
        </recommendedName>
    </component>
</protein>
<name>GAG_RSVSB</name>
<proteinExistence type="evidence at protein level"/>
<accession>O92954</accession>
<dbReference type="EC" id="3.4.23.-"/>
<dbReference type="EMBL" id="AF052428">
    <property type="protein sequence ID" value="AAC08987.1"/>
    <property type="molecule type" value="Genomic_DNA"/>
</dbReference>
<dbReference type="PDB" id="1D1D">
    <property type="method" value="NMR"/>
    <property type="chains" value="A=239-479"/>
</dbReference>
<dbReference type="PDBsum" id="1D1D"/>
<dbReference type="BMRB" id="O92954"/>
<dbReference type="SMR" id="O92954"/>
<dbReference type="MEROPS" id="A02.015"/>
<dbReference type="EvolutionaryTrace" id="O92954"/>
<dbReference type="Proteomes" id="UP000159275">
    <property type="component" value="Genome"/>
</dbReference>
<dbReference type="GO" id="GO:0044196">
    <property type="term" value="C:host cell nucleolus"/>
    <property type="evidence" value="ECO:0007669"/>
    <property type="project" value="UniProtKB-SubCell"/>
</dbReference>
<dbReference type="GO" id="GO:0044095">
    <property type="term" value="C:host cell nucleoplasm"/>
    <property type="evidence" value="ECO:0007669"/>
    <property type="project" value="UniProtKB-SubCell"/>
</dbReference>
<dbReference type="GO" id="GO:0019028">
    <property type="term" value="C:viral capsid"/>
    <property type="evidence" value="ECO:0007669"/>
    <property type="project" value="UniProtKB-KW"/>
</dbReference>
<dbReference type="GO" id="GO:0004190">
    <property type="term" value="F:aspartic-type endopeptidase activity"/>
    <property type="evidence" value="ECO:0007669"/>
    <property type="project" value="UniProtKB-KW"/>
</dbReference>
<dbReference type="GO" id="GO:0003676">
    <property type="term" value="F:nucleic acid binding"/>
    <property type="evidence" value="ECO:0007669"/>
    <property type="project" value="InterPro"/>
</dbReference>
<dbReference type="GO" id="GO:0039660">
    <property type="term" value="F:structural constituent of virion"/>
    <property type="evidence" value="ECO:0007669"/>
    <property type="project" value="UniProtKB-KW"/>
</dbReference>
<dbReference type="GO" id="GO:0008270">
    <property type="term" value="F:zinc ion binding"/>
    <property type="evidence" value="ECO:0007669"/>
    <property type="project" value="UniProtKB-KW"/>
</dbReference>
<dbReference type="GO" id="GO:0006508">
    <property type="term" value="P:proteolysis"/>
    <property type="evidence" value="ECO:0007669"/>
    <property type="project" value="UniProtKB-KW"/>
</dbReference>
<dbReference type="GO" id="GO:0046797">
    <property type="term" value="P:viral procapsid maturation"/>
    <property type="evidence" value="ECO:0007669"/>
    <property type="project" value="UniProtKB-KW"/>
</dbReference>
<dbReference type="GO" id="GO:0075523">
    <property type="term" value="P:viral translational frameshifting"/>
    <property type="evidence" value="ECO:0007669"/>
    <property type="project" value="UniProtKB-KW"/>
</dbReference>
<dbReference type="CDD" id="cd05482">
    <property type="entry name" value="HIV_retropepsin_like"/>
    <property type="match status" value="1"/>
</dbReference>
<dbReference type="FunFam" id="1.10.375.10:FF:000003">
    <property type="entry name" value="Gag polyprotein"/>
    <property type="match status" value="1"/>
</dbReference>
<dbReference type="Gene3D" id="1.10.1200.30">
    <property type="match status" value="1"/>
</dbReference>
<dbReference type="Gene3D" id="2.40.70.10">
    <property type="entry name" value="Acid Proteases"/>
    <property type="match status" value="1"/>
</dbReference>
<dbReference type="Gene3D" id="1.10.375.10">
    <property type="entry name" value="Human Immunodeficiency Virus Type 1 Capsid Protein"/>
    <property type="match status" value="1"/>
</dbReference>
<dbReference type="Gene3D" id="1.10.150.90">
    <property type="entry name" value="Immunodeficiency lentiviruses, gag gene matrix protein p17"/>
    <property type="match status" value="1"/>
</dbReference>
<dbReference type="Gene3D" id="4.10.60.10">
    <property type="entry name" value="Zinc finger, CCHC-type"/>
    <property type="match status" value="1"/>
</dbReference>
<dbReference type="InterPro" id="IPR001969">
    <property type="entry name" value="Aspartic_peptidase_AS"/>
</dbReference>
<dbReference type="InterPro" id="IPR004028">
    <property type="entry name" value="Gag_M"/>
</dbReference>
<dbReference type="InterPro" id="IPR012344">
    <property type="entry name" value="Matrix_HIV/RSV_N"/>
</dbReference>
<dbReference type="InterPro" id="IPR001995">
    <property type="entry name" value="Peptidase_A2_cat"/>
</dbReference>
<dbReference type="InterPro" id="IPR021109">
    <property type="entry name" value="Peptidase_aspartic_dom_sf"/>
</dbReference>
<dbReference type="InterPro" id="IPR050195">
    <property type="entry name" value="Primate_lentivir_Gag_pol-like"/>
</dbReference>
<dbReference type="InterPro" id="IPR034170">
    <property type="entry name" value="Retropepsin-like_cat_dom"/>
</dbReference>
<dbReference type="InterPro" id="IPR018061">
    <property type="entry name" value="Retropepsins"/>
</dbReference>
<dbReference type="InterPro" id="IPR008916">
    <property type="entry name" value="Retrov_capsid_C"/>
</dbReference>
<dbReference type="InterPro" id="IPR008919">
    <property type="entry name" value="Retrov_capsid_N"/>
</dbReference>
<dbReference type="InterPro" id="IPR010999">
    <property type="entry name" value="Retrovr_matrix"/>
</dbReference>
<dbReference type="InterPro" id="IPR001878">
    <property type="entry name" value="Znf_CCHC"/>
</dbReference>
<dbReference type="InterPro" id="IPR036875">
    <property type="entry name" value="Znf_CCHC_sf"/>
</dbReference>
<dbReference type="PANTHER" id="PTHR40389">
    <property type="entry name" value="ENDOGENOUS RETROVIRUS GROUP K MEMBER 24 GAG POLYPROTEIN-RELATED"/>
    <property type="match status" value="1"/>
</dbReference>
<dbReference type="PANTHER" id="PTHR40389:SF3">
    <property type="entry name" value="IGE-BINDING PROTEIN"/>
    <property type="match status" value="1"/>
</dbReference>
<dbReference type="Pfam" id="PF00607">
    <property type="entry name" value="Gag_p24"/>
    <property type="match status" value="1"/>
</dbReference>
<dbReference type="Pfam" id="PF02813">
    <property type="entry name" value="Retro_M"/>
    <property type="match status" value="1"/>
</dbReference>
<dbReference type="Pfam" id="PF00077">
    <property type="entry name" value="RVP"/>
    <property type="match status" value="1"/>
</dbReference>
<dbReference type="Pfam" id="PF00098">
    <property type="entry name" value="zf-CCHC"/>
    <property type="match status" value="1"/>
</dbReference>
<dbReference type="SMART" id="SM00343">
    <property type="entry name" value="ZnF_C2HC"/>
    <property type="match status" value="2"/>
</dbReference>
<dbReference type="SUPFAM" id="SSF50630">
    <property type="entry name" value="Acid proteases"/>
    <property type="match status" value="1"/>
</dbReference>
<dbReference type="SUPFAM" id="SSF47836">
    <property type="entry name" value="Retroviral matrix proteins"/>
    <property type="match status" value="1"/>
</dbReference>
<dbReference type="SUPFAM" id="SSF47353">
    <property type="entry name" value="Retrovirus capsid dimerization domain-like"/>
    <property type="match status" value="1"/>
</dbReference>
<dbReference type="SUPFAM" id="SSF47943">
    <property type="entry name" value="Retrovirus capsid protein, N-terminal core domain"/>
    <property type="match status" value="1"/>
</dbReference>
<dbReference type="SUPFAM" id="SSF57756">
    <property type="entry name" value="Retrovirus zinc finger-like domains"/>
    <property type="match status" value="1"/>
</dbReference>
<dbReference type="PROSITE" id="PS50175">
    <property type="entry name" value="ASP_PROT_RETROV"/>
    <property type="match status" value="1"/>
</dbReference>
<dbReference type="PROSITE" id="PS00141">
    <property type="entry name" value="ASP_PROTEASE"/>
    <property type="match status" value="1"/>
</dbReference>
<dbReference type="PROSITE" id="PS50158">
    <property type="entry name" value="ZF_CCHC"/>
    <property type="match status" value="1"/>
</dbReference>
<organism>
    <name type="scientific">Rous sarcoma virus subgroup B (strain Schmidt-Ruppin)</name>
    <name type="common">RSV-SR-B</name>
    <dbReference type="NCBI Taxonomy" id="269447"/>
    <lineage>
        <taxon>Viruses</taxon>
        <taxon>Riboviria</taxon>
        <taxon>Pararnavirae</taxon>
        <taxon>Artverviricota</taxon>
        <taxon>Revtraviricetes</taxon>
        <taxon>Ortervirales</taxon>
        <taxon>Retroviridae</taxon>
        <taxon>Orthoretrovirinae</taxon>
        <taxon>Alpharetrovirus</taxon>
        <taxon>Rous sarcoma virus</taxon>
    </lineage>
</organism>
<reference key="1">
    <citation type="submission" date="1998-03" db="EMBL/GenBank/DDBJ databases">
        <title>Complete nucleotide sequence of avian sarcoma virus.</title>
        <authorList>
            <person name="Bouck J."/>
            <person name="Skalka A.M."/>
            <person name="Katz R.A."/>
        </authorList>
    </citation>
    <scope>NUCLEOTIDE SEQUENCE [GENOMIC DNA]</scope>
    <source>
        <strain>Schmidt-Ruppin B</strain>
    </source>
</reference>
<reference key="2">
    <citation type="journal article" date="2000" name="J. Mol. Biol.">
        <title>Solution structure and dynamics of the Rous sarcoma virus capsid protein and comparison with capsid proteins of other retroviruses.</title>
        <authorList>
            <person name="Campos-Olivas R."/>
            <person name="Newman J.L."/>
            <person name="Summers M.F."/>
        </authorList>
    </citation>
    <scope>STRUCTURE BY NMR OF 239-479</scope>
</reference>
<feature type="chain" id="PRO_0000442112" description="Gag polyprotein">
    <location>
        <begin position="1"/>
        <end position="701"/>
    </location>
</feature>
<feature type="chain" id="PRO_5000054139" description="Matrix protein p19" evidence="1">
    <location>
        <begin position="1"/>
        <end position="155"/>
    </location>
</feature>
<feature type="chain" id="PRO_0000397081" description="p2A" evidence="1">
    <location>
        <begin position="156"/>
        <end position="166"/>
    </location>
</feature>
<feature type="chain" id="PRO_0000397082" description="p2B" evidence="1">
    <location>
        <begin position="167"/>
        <end position="177"/>
    </location>
</feature>
<feature type="chain" id="PRO_5000054140" description="p10" evidence="1">
    <location>
        <begin position="178"/>
        <end position="239"/>
    </location>
</feature>
<feature type="chain" id="PRO_5000054141" description="Capsid protein p27, alternate cleaved 2" evidence="1">
    <location>
        <begin position="240"/>
        <end position="479"/>
    </location>
</feature>
<feature type="chain" id="PRO_0000442113" description="Capsid protein p27, alternate cleaved 1" evidence="1">
    <location>
        <begin position="240"/>
        <end position="476"/>
    </location>
</feature>
<feature type="peptide" id="PRO_0000397083" description="Spacer peptide">
    <location>
        <begin position="480"/>
        <end position="488"/>
    </location>
</feature>
<feature type="chain" id="PRO_5000054142" description="Nucleocapsid protein p12" evidence="1">
    <location>
        <begin position="489"/>
        <end position="577"/>
    </location>
</feature>
<feature type="chain" id="PRO_5000054143" description="Protease p15" evidence="1">
    <location>
        <begin position="578"/>
        <end position="701"/>
    </location>
</feature>
<feature type="domain" description="Peptidase A2" evidence="4">
    <location>
        <begin position="609"/>
        <end position="690"/>
    </location>
</feature>
<feature type="zinc finger region" description="CCHC-type 1" evidence="3">
    <location>
        <begin position="507"/>
        <end position="524"/>
    </location>
</feature>
<feature type="zinc finger region" description="CCHC-type 2" evidence="3">
    <location>
        <begin position="533"/>
        <end position="550"/>
    </location>
</feature>
<feature type="region of interest" description="Disordered" evidence="6">
    <location>
        <begin position="128"/>
        <end position="150"/>
    </location>
</feature>
<feature type="region of interest" description="Disordered" evidence="6">
    <location>
        <begin position="181"/>
        <end position="215"/>
    </location>
</feature>
<feature type="region of interest" description="Involved in capsid protein dimerization" evidence="1">
    <location>
        <begin position="217"/>
        <end position="259"/>
    </location>
</feature>
<feature type="region of interest" description="Involved in capsid protein dimerization" evidence="1">
    <location>
        <begin position="290"/>
        <end position="298"/>
    </location>
</feature>
<feature type="region of interest" description="Involved in capsid protein dimerization" evidence="1">
    <location>
        <begin position="351"/>
        <end position="362"/>
    </location>
</feature>
<feature type="region of interest" description="Disordered" evidence="6">
    <location>
        <begin position="544"/>
        <end position="571"/>
    </location>
</feature>
<feature type="short sequence motif" description="PPXY motif" evidence="1">
    <location>
        <begin position="172"/>
        <end position="175"/>
    </location>
</feature>
<feature type="short sequence motif" description="LYPX(n)L motif" evidence="1">
    <location>
        <begin position="180"/>
        <end position="184"/>
    </location>
</feature>
<feature type="short sequence motif" description="Nuclear export signal" evidence="1">
    <location>
        <begin position="219"/>
        <end position="229"/>
    </location>
</feature>
<feature type="short sequence motif" description="Nuclear/nucleolar localization signal" evidence="1">
    <location>
        <begin position="524"/>
        <end position="527"/>
    </location>
</feature>
<feature type="compositionally biased region" description="Basic and acidic residues" evidence="6">
    <location>
        <begin position="128"/>
        <end position="141"/>
    </location>
</feature>
<feature type="active site" description="For protease activity; shared with dimeric partner" evidence="5">
    <location>
        <position position="614"/>
    </location>
</feature>
<feature type="site" description="Cleavage; by viral protease p15" evidence="1">
    <location>
        <begin position="155"/>
        <end position="156"/>
    </location>
</feature>
<feature type="site" description="Cleavage; by viral protease p15" evidence="1">
    <location>
        <begin position="166"/>
        <end position="167"/>
    </location>
</feature>
<feature type="site" description="Cleavage; by viral protease p15" evidence="1">
    <location>
        <begin position="177"/>
        <end position="178"/>
    </location>
</feature>
<feature type="site" description="Cleavage; by viral protease p15" evidence="1">
    <location>
        <begin position="239"/>
        <end position="240"/>
    </location>
</feature>
<feature type="site" description="Involved in capsid protein dimerization upon acidification" evidence="1">
    <location>
        <position position="418"/>
    </location>
</feature>
<feature type="site" description="Involved in capsid protein dimerization upon acidification" evidence="1">
    <location>
        <position position="430"/>
    </location>
</feature>
<feature type="site" description="Cleavage; by viral protease p15" evidence="1">
    <location>
        <begin position="476"/>
        <end position="477"/>
    </location>
</feature>
<feature type="site" description="Cleavage; by viral protease p15" evidence="1">
    <location>
        <begin position="479"/>
        <end position="480"/>
    </location>
</feature>
<feature type="site" description="Cleavage; by viral protease p15" evidence="1">
    <location>
        <begin position="488"/>
        <end position="489"/>
    </location>
</feature>
<feature type="site" description="Cleavage; by viral protease p15" evidence="1">
    <location>
        <begin position="577"/>
        <end position="578"/>
    </location>
</feature>
<feature type="helix" evidence="8">
    <location>
        <begin position="255"/>
        <end position="268"/>
    </location>
</feature>
<feature type="helix" evidence="8">
    <location>
        <begin position="274"/>
        <end position="283"/>
    </location>
</feature>
<feature type="helix" evidence="8">
    <location>
        <begin position="289"/>
        <end position="299"/>
    </location>
</feature>
<feature type="helix" evidence="8">
    <location>
        <begin position="302"/>
        <end position="325"/>
    </location>
</feature>
<feature type="strand" evidence="8">
    <location>
        <begin position="332"/>
        <end position="335"/>
    </location>
</feature>
<feature type="turn" evidence="8">
    <location>
        <begin position="336"/>
        <end position="338"/>
    </location>
</feature>
<feature type="helix" evidence="8">
    <location>
        <begin position="342"/>
        <end position="346"/>
    </location>
</feature>
<feature type="turn" evidence="8">
    <location>
        <begin position="350"/>
        <end position="354"/>
    </location>
</feature>
<feature type="helix" evidence="8">
    <location>
        <begin position="356"/>
        <end position="362"/>
    </location>
</feature>
<feature type="helix" evidence="8">
    <location>
        <begin position="367"/>
        <end position="384"/>
    </location>
</feature>
<feature type="turn" evidence="8">
    <location>
        <begin position="391"/>
        <end position="393"/>
    </location>
</feature>
<feature type="strand" evidence="8">
    <location>
        <begin position="399"/>
        <end position="401"/>
    </location>
</feature>
<feature type="helix" evidence="8">
    <location>
        <begin position="403"/>
        <end position="415"/>
    </location>
</feature>
<feature type="turn" evidence="8">
    <location>
        <begin position="421"/>
        <end position="425"/>
    </location>
</feature>
<feature type="helix" evidence="8">
    <location>
        <begin position="426"/>
        <end position="432"/>
    </location>
</feature>
<feature type="helix" evidence="8">
    <location>
        <begin position="438"/>
        <end position="445"/>
    </location>
</feature>
<feature type="helix" evidence="8">
    <location>
        <begin position="456"/>
        <end position="465"/>
    </location>
</feature>
<keyword id="KW-0002">3D-structure</keyword>
<keyword id="KW-0064">Aspartyl protease</keyword>
<keyword id="KW-0167">Capsid protein</keyword>
<keyword id="KW-1048">Host nucleus</keyword>
<keyword id="KW-0378">Hydrolase</keyword>
<keyword id="KW-0479">Metal-binding</keyword>
<keyword id="KW-0645">Protease</keyword>
<keyword id="KW-0677">Repeat</keyword>
<keyword id="KW-0688">Ribosomal frameshifting</keyword>
<keyword id="KW-0118">Viral capsid assembly</keyword>
<keyword id="KW-1273">Viral capsid maturation</keyword>
<keyword id="KW-0468">Viral matrix protein</keyword>
<keyword id="KW-1188">Viral release from host cell</keyword>
<keyword id="KW-0946">Virion</keyword>
<keyword id="KW-0862">Zinc</keyword>
<keyword id="KW-0863">Zinc-finger</keyword>